<dbReference type="EC" id="6.1.1.4" evidence="1"/>
<dbReference type="EMBL" id="CP000903">
    <property type="protein sequence ID" value="ABY45726.1"/>
    <property type="molecule type" value="Genomic_DNA"/>
</dbReference>
<dbReference type="RefSeq" id="WP_012261857.1">
    <property type="nucleotide sequence ID" value="NC_010184.1"/>
</dbReference>
<dbReference type="SMR" id="A9VLA2"/>
<dbReference type="KEGG" id="bwe:BcerKBAB4_4570"/>
<dbReference type="eggNOG" id="COG0495">
    <property type="taxonomic scope" value="Bacteria"/>
</dbReference>
<dbReference type="HOGENOM" id="CLU_004427_0_0_9"/>
<dbReference type="Proteomes" id="UP000002154">
    <property type="component" value="Chromosome"/>
</dbReference>
<dbReference type="GO" id="GO:0005829">
    <property type="term" value="C:cytosol"/>
    <property type="evidence" value="ECO:0007669"/>
    <property type="project" value="TreeGrafter"/>
</dbReference>
<dbReference type="GO" id="GO:0002161">
    <property type="term" value="F:aminoacyl-tRNA deacylase activity"/>
    <property type="evidence" value="ECO:0007669"/>
    <property type="project" value="InterPro"/>
</dbReference>
<dbReference type="GO" id="GO:0005524">
    <property type="term" value="F:ATP binding"/>
    <property type="evidence" value="ECO:0007669"/>
    <property type="project" value="UniProtKB-UniRule"/>
</dbReference>
<dbReference type="GO" id="GO:0004823">
    <property type="term" value="F:leucine-tRNA ligase activity"/>
    <property type="evidence" value="ECO:0007669"/>
    <property type="project" value="UniProtKB-UniRule"/>
</dbReference>
<dbReference type="GO" id="GO:0006429">
    <property type="term" value="P:leucyl-tRNA aminoacylation"/>
    <property type="evidence" value="ECO:0007669"/>
    <property type="project" value="UniProtKB-UniRule"/>
</dbReference>
<dbReference type="CDD" id="cd07958">
    <property type="entry name" value="Anticodon_Ia_Leu_BEm"/>
    <property type="match status" value="1"/>
</dbReference>
<dbReference type="CDD" id="cd00812">
    <property type="entry name" value="LeuRS_core"/>
    <property type="match status" value="1"/>
</dbReference>
<dbReference type="FunFam" id="1.10.730.10:FF:000012">
    <property type="entry name" value="Leucine--tRNA ligase"/>
    <property type="match status" value="1"/>
</dbReference>
<dbReference type="FunFam" id="1.10.730.10:FF:000018">
    <property type="entry name" value="Leucine--tRNA ligase"/>
    <property type="match status" value="1"/>
</dbReference>
<dbReference type="FunFam" id="3.10.20.590:FF:000001">
    <property type="entry name" value="Leucine--tRNA ligase"/>
    <property type="match status" value="1"/>
</dbReference>
<dbReference type="FunFam" id="3.40.50.620:FF:000056">
    <property type="entry name" value="Leucine--tRNA ligase"/>
    <property type="match status" value="1"/>
</dbReference>
<dbReference type="FunFam" id="3.40.50.620:FF:000077">
    <property type="entry name" value="Leucine--tRNA ligase"/>
    <property type="match status" value="1"/>
</dbReference>
<dbReference type="Gene3D" id="3.10.20.590">
    <property type="match status" value="1"/>
</dbReference>
<dbReference type="Gene3D" id="3.40.50.620">
    <property type="entry name" value="HUPs"/>
    <property type="match status" value="2"/>
</dbReference>
<dbReference type="Gene3D" id="1.10.730.10">
    <property type="entry name" value="Isoleucyl-tRNA Synthetase, Domain 1"/>
    <property type="match status" value="1"/>
</dbReference>
<dbReference type="HAMAP" id="MF_00049_B">
    <property type="entry name" value="Leu_tRNA_synth_B"/>
    <property type="match status" value="1"/>
</dbReference>
<dbReference type="InterPro" id="IPR001412">
    <property type="entry name" value="aa-tRNA-synth_I_CS"/>
</dbReference>
<dbReference type="InterPro" id="IPR002300">
    <property type="entry name" value="aa-tRNA-synth_Ia"/>
</dbReference>
<dbReference type="InterPro" id="IPR002302">
    <property type="entry name" value="Leu-tRNA-ligase"/>
</dbReference>
<dbReference type="InterPro" id="IPR025709">
    <property type="entry name" value="Leu_tRNA-synth_edit"/>
</dbReference>
<dbReference type="InterPro" id="IPR013155">
    <property type="entry name" value="M/V/L/I-tRNA-synth_anticd-bd"/>
</dbReference>
<dbReference type="InterPro" id="IPR015413">
    <property type="entry name" value="Methionyl/Leucyl_tRNA_Synth"/>
</dbReference>
<dbReference type="InterPro" id="IPR014729">
    <property type="entry name" value="Rossmann-like_a/b/a_fold"/>
</dbReference>
<dbReference type="InterPro" id="IPR009080">
    <property type="entry name" value="tRNAsynth_Ia_anticodon-bd"/>
</dbReference>
<dbReference type="InterPro" id="IPR009008">
    <property type="entry name" value="Val/Leu/Ile-tRNA-synth_edit"/>
</dbReference>
<dbReference type="NCBIfam" id="TIGR00396">
    <property type="entry name" value="leuS_bact"/>
    <property type="match status" value="1"/>
</dbReference>
<dbReference type="PANTHER" id="PTHR43740:SF2">
    <property type="entry name" value="LEUCINE--TRNA LIGASE, MITOCHONDRIAL"/>
    <property type="match status" value="1"/>
</dbReference>
<dbReference type="PANTHER" id="PTHR43740">
    <property type="entry name" value="LEUCYL-TRNA SYNTHETASE"/>
    <property type="match status" value="1"/>
</dbReference>
<dbReference type="Pfam" id="PF08264">
    <property type="entry name" value="Anticodon_1"/>
    <property type="match status" value="1"/>
</dbReference>
<dbReference type="Pfam" id="PF00133">
    <property type="entry name" value="tRNA-synt_1"/>
    <property type="match status" value="1"/>
</dbReference>
<dbReference type="Pfam" id="PF13603">
    <property type="entry name" value="tRNA-synt_1_2"/>
    <property type="match status" value="1"/>
</dbReference>
<dbReference type="Pfam" id="PF09334">
    <property type="entry name" value="tRNA-synt_1g"/>
    <property type="match status" value="1"/>
</dbReference>
<dbReference type="PRINTS" id="PR00985">
    <property type="entry name" value="TRNASYNTHLEU"/>
</dbReference>
<dbReference type="SUPFAM" id="SSF47323">
    <property type="entry name" value="Anticodon-binding domain of a subclass of class I aminoacyl-tRNA synthetases"/>
    <property type="match status" value="1"/>
</dbReference>
<dbReference type="SUPFAM" id="SSF52374">
    <property type="entry name" value="Nucleotidylyl transferase"/>
    <property type="match status" value="1"/>
</dbReference>
<dbReference type="SUPFAM" id="SSF50677">
    <property type="entry name" value="ValRS/IleRS/LeuRS editing domain"/>
    <property type="match status" value="1"/>
</dbReference>
<dbReference type="PROSITE" id="PS00178">
    <property type="entry name" value="AA_TRNA_LIGASE_I"/>
    <property type="match status" value="1"/>
</dbReference>
<reference key="1">
    <citation type="journal article" date="2008" name="Chem. Biol. Interact.">
        <title>Extending the Bacillus cereus group genomics to putative food-borne pathogens of different toxicity.</title>
        <authorList>
            <person name="Lapidus A."/>
            <person name="Goltsman E."/>
            <person name="Auger S."/>
            <person name="Galleron N."/>
            <person name="Segurens B."/>
            <person name="Dossat C."/>
            <person name="Land M.L."/>
            <person name="Broussolle V."/>
            <person name="Brillard J."/>
            <person name="Guinebretiere M.-H."/>
            <person name="Sanchis V."/>
            <person name="Nguen-the C."/>
            <person name="Lereclus D."/>
            <person name="Richardson P."/>
            <person name="Wincker P."/>
            <person name="Weissenbach J."/>
            <person name="Ehrlich S.D."/>
            <person name="Sorokin A."/>
        </authorList>
    </citation>
    <scope>NUCLEOTIDE SEQUENCE [LARGE SCALE GENOMIC DNA]</scope>
    <source>
        <strain>KBAB4</strain>
    </source>
</reference>
<gene>
    <name evidence="1" type="primary">leuS</name>
    <name type="ordered locus">BcerKBAB4_4570</name>
</gene>
<sequence length="802" mass="91372">MSFNHQEIEKKWQGHWEENKTFRTPDETEKPKFYALDMFPYPSGAGLHVGHPEGYTATDILSRMKRMQGYNVLHPMGWDAFGLPAEQYALDTGNSPAEFTELNINTFRNQIKALGFSYDWDREVNTTDPTYYKWTQWIFLKLFEKGLAYVDEVPVNWCPALGTVLANEEIIDGKSERGGHPVERRPMRQWMLKITAYGDRLLEDLDELNWPESLKDMQRNWIGRSEGAEVHFNIDGTDEKFTVFTTRPDTLFGASYCVLAPEHALVANITIPEQKEAVEAYINSVKMKSDLERTELAKEKTGVFTGAYAVNPVNGEKLPIWIADYVLATYGTGAVMAVPAHDERDYEFASTFNLPMKEVVKGGDISKEAYTGDGAHVNSAFLDGLNKEKAIVKMIEWLEVTSAGNQKVTYRLRDWLFSRQRYWGEPIPVIHWEDGTMTAVKEEELPLVLPKTENIRPSGTGESPLANIEEWVNVVDPETGKKGRRETNTMPQWAGSCWYYLRYIDPNNSEALVDPEKVKQWLPVDIYIGGAEHAVLHLLYARFWHKVLYDIGVVPTKEPFQQLFNQGMILGENNEKMSKSKGNVVNPDDIVASHGADTLRLYEMFMGPLDASIAWSENGLDGARRFLDRVWRLFIQENGELSEKITDAPNKDLEKAYHQTVKKVTEDYAELRFNTAISQMMVFINDAYKAETLPKEYVEGFVKMIAPVAPHIGEELWNKLGYSETITYASWPTFDESKLVEDEVEIVVQIMGKVRTKLTMSKDASKEEMEQLALEAIKEQIEGKTVRKVIVVPGKLVNVVAN</sequence>
<organism>
    <name type="scientific">Bacillus mycoides (strain KBAB4)</name>
    <name type="common">Bacillus weihenstephanensis</name>
    <dbReference type="NCBI Taxonomy" id="315730"/>
    <lineage>
        <taxon>Bacteria</taxon>
        <taxon>Bacillati</taxon>
        <taxon>Bacillota</taxon>
        <taxon>Bacilli</taxon>
        <taxon>Bacillales</taxon>
        <taxon>Bacillaceae</taxon>
        <taxon>Bacillus</taxon>
        <taxon>Bacillus cereus group</taxon>
    </lineage>
</organism>
<protein>
    <recommendedName>
        <fullName evidence="1">Leucine--tRNA ligase</fullName>
        <ecNumber evidence="1">6.1.1.4</ecNumber>
    </recommendedName>
    <alternativeName>
        <fullName evidence="1">Leucyl-tRNA synthetase</fullName>
        <shortName evidence="1">LeuRS</shortName>
    </alternativeName>
</protein>
<keyword id="KW-0030">Aminoacyl-tRNA synthetase</keyword>
<keyword id="KW-0067">ATP-binding</keyword>
<keyword id="KW-0963">Cytoplasm</keyword>
<keyword id="KW-0436">Ligase</keyword>
<keyword id="KW-0547">Nucleotide-binding</keyword>
<keyword id="KW-0648">Protein biosynthesis</keyword>
<comment type="catalytic activity">
    <reaction evidence="1">
        <text>tRNA(Leu) + L-leucine + ATP = L-leucyl-tRNA(Leu) + AMP + diphosphate</text>
        <dbReference type="Rhea" id="RHEA:11688"/>
        <dbReference type="Rhea" id="RHEA-COMP:9613"/>
        <dbReference type="Rhea" id="RHEA-COMP:9622"/>
        <dbReference type="ChEBI" id="CHEBI:30616"/>
        <dbReference type="ChEBI" id="CHEBI:33019"/>
        <dbReference type="ChEBI" id="CHEBI:57427"/>
        <dbReference type="ChEBI" id="CHEBI:78442"/>
        <dbReference type="ChEBI" id="CHEBI:78494"/>
        <dbReference type="ChEBI" id="CHEBI:456215"/>
        <dbReference type="EC" id="6.1.1.4"/>
    </reaction>
</comment>
<comment type="subcellular location">
    <subcellularLocation>
        <location evidence="1">Cytoplasm</location>
    </subcellularLocation>
</comment>
<comment type="similarity">
    <text evidence="1">Belongs to the class-I aminoacyl-tRNA synthetase family.</text>
</comment>
<feature type="chain" id="PRO_1000091290" description="Leucine--tRNA ligase">
    <location>
        <begin position="1"/>
        <end position="802"/>
    </location>
</feature>
<feature type="short sequence motif" description="'HIGH' region">
    <location>
        <begin position="40"/>
        <end position="51"/>
    </location>
</feature>
<feature type="short sequence motif" description="'KMSKS' region">
    <location>
        <begin position="576"/>
        <end position="580"/>
    </location>
</feature>
<feature type="binding site" evidence="1">
    <location>
        <position position="579"/>
    </location>
    <ligand>
        <name>ATP</name>
        <dbReference type="ChEBI" id="CHEBI:30616"/>
    </ligand>
</feature>
<evidence type="ECO:0000255" key="1">
    <source>
        <dbReference type="HAMAP-Rule" id="MF_00049"/>
    </source>
</evidence>
<accession>A9VLA2</accession>
<proteinExistence type="inferred from homology"/>
<name>SYL_BACMK</name>